<proteinExistence type="inferred from homology"/>
<sequence>MERTFIAIKPDGVQRGLVGEILQRFERRGFKLVGLKLMQVSEALAQKHYAEHKERPFFGGLVAFITSSPVVAVVLEGKGVVATARAMMGVTNPLNSPLGTIRGDYGIDIGRNIIHGSDSLESAEREIALWFAPAELLEWQATLGSWVYE</sequence>
<dbReference type="EC" id="2.7.4.6" evidence="1"/>
<dbReference type="EMBL" id="BA000045">
    <property type="protein sequence ID" value="BAC88651.1"/>
    <property type="molecule type" value="Genomic_DNA"/>
</dbReference>
<dbReference type="RefSeq" id="NP_923656.1">
    <property type="nucleotide sequence ID" value="NC_005125.1"/>
</dbReference>
<dbReference type="RefSeq" id="WP_011140712.1">
    <property type="nucleotide sequence ID" value="NC_005125.1"/>
</dbReference>
<dbReference type="SMR" id="Q7NMQ5"/>
<dbReference type="FunCoup" id="Q7NMQ5">
    <property type="interactions" value="387"/>
</dbReference>
<dbReference type="STRING" id="251221.gene:10758186"/>
<dbReference type="EnsemblBacteria" id="BAC88651">
    <property type="protein sequence ID" value="BAC88651"/>
    <property type="gene ID" value="BAC88651"/>
</dbReference>
<dbReference type="KEGG" id="gvi:glr0710"/>
<dbReference type="PATRIC" id="fig|251221.4.peg.722"/>
<dbReference type="eggNOG" id="COG0105">
    <property type="taxonomic scope" value="Bacteria"/>
</dbReference>
<dbReference type="HOGENOM" id="CLU_060216_6_3_3"/>
<dbReference type="InParanoid" id="Q7NMQ5"/>
<dbReference type="OrthoDB" id="9801161at2"/>
<dbReference type="PhylomeDB" id="Q7NMQ5"/>
<dbReference type="Proteomes" id="UP000000557">
    <property type="component" value="Chromosome"/>
</dbReference>
<dbReference type="GO" id="GO:0005737">
    <property type="term" value="C:cytoplasm"/>
    <property type="evidence" value="ECO:0007669"/>
    <property type="project" value="UniProtKB-SubCell"/>
</dbReference>
<dbReference type="GO" id="GO:0005524">
    <property type="term" value="F:ATP binding"/>
    <property type="evidence" value="ECO:0007669"/>
    <property type="project" value="UniProtKB-UniRule"/>
</dbReference>
<dbReference type="GO" id="GO:0046872">
    <property type="term" value="F:metal ion binding"/>
    <property type="evidence" value="ECO:0007669"/>
    <property type="project" value="UniProtKB-KW"/>
</dbReference>
<dbReference type="GO" id="GO:0004550">
    <property type="term" value="F:nucleoside diphosphate kinase activity"/>
    <property type="evidence" value="ECO:0007669"/>
    <property type="project" value="UniProtKB-UniRule"/>
</dbReference>
<dbReference type="GO" id="GO:0006241">
    <property type="term" value="P:CTP biosynthetic process"/>
    <property type="evidence" value="ECO:0007669"/>
    <property type="project" value="UniProtKB-UniRule"/>
</dbReference>
<dbReference type="GO" id="GO:0006183">
    <property type="term" value="P:GTP biosynthetic process"/>
    <property type="evidence" value="ECO:0007669"/>
    <property type="project" value="UniProtKB-UniRule"/>
</dbReference>
<dbReference type="GO" id="GO:0006228">
    <property type="term" value="P:UTP biosynthetic process"/>
    <property type="evidence" value="ECO:0007669"/>
    <property type="project" value="UniProtKB-UniRule"/>
</dbReference>
<dbReference type="CDD" id="cd04413">
    <property type="entry name" value="NDPk_I"/>
    <property type="match status" value="1"/>
</dbReference>
<dbReference type="FunFam" id="3.30.70.141:FF:000002">
    <property type="entry name" value="Nucleoside diphosphate kinase"/>
    <property type="match status" value="1"/>
</dbReference>
<dbReference type="Gene3D" id="3.30.70.141">
    <property type="entry name" value="Nucleoside diphosphate kinase-like domain"/>
    <property type="match status" value="1"/>
</dbReference>
<dbReference type="HAMAP" id="MF_00451">
    <property type="entry name" value="NDP_kinase"/>
    <property type="match status" value="1"/>
</dbReference>
<dbReference type="InterPro" id="IPR034907">
    <property type="entry name" value="NDK-like_dom"/>
</dbReference>
<dbReference type="InterPro" id="IPR036850">
    <property type="entry name" value="NDK-like_dom_sf"/>
</dbReference>
<dbReference type="InterPro" id="IPR001564">
    <property type="entry name" value="Nucleoside_diP_kinase"/>
</dbReference>
<dbReference type="InterPro" id="IPR023005">
    <property type="entry name" value="Nucleoside_diP_kinase_AS"/>
</dbReference>
<dbReference type="NCBIfam" id="NF001908">
    <property type="entry name" value="PRK00668.1"/>
    <property type="match status" value="1"/>
</dbReference>
<dbReference type="PANTHER" id="PTHR11349">
    <property type="entry name" value="NUCLEOSIDE DIPHOSPHATE KINASE"/>
    <property type="match status" value="1"/>
</dbReference>
<dbReference type="Pfam" id="PF00334">
    <property type="entry name" value="NDK"/>
    <property type="match status" value="1"/>
</dbReference>
<dbReference type="PRINTS" id="PR01243">
    <property type="entry name" value="NUCDPKINASE"/>
</dbReference>
<dbReference type="SMART" id="SM00562">
    <property type="entry name" value="NDK"/>
    <property type="match status" value="1"/>
</dbReference>
<dbReference type="SUPFAM" id="SSF54919">
    <property type="entry name" value="Nucleoside diphosphate kinase, NDK"/>
    <property type="match status" value="1"/>
</dbReference>
<dbReference type="PROSITE" id="PS00469">
    <property type="entry name" value="NDPK"/>
    <property type="match status" value="1"/>
</dbReference>
<dbReference type="PROSITE" id="PS51374">
    <property type="entry name" value="NDPK_LIKE"/>
    <property type="match status" value="1"/>
</dbReference>
<reference key="1">
    <citation type="journal article" date="2003" name="DNA Res.">
        <title>Complete genome structure of Gloeobacter violaceus PCC 7421, a cyanobacterium that lacks thylakoids.</title>
        <authorList>
            <person name="Nakamura Y."/>
            <person name="Kaneko T."/>
            <person name="Sato S."/>
            <person name="Mimuro M."/>
            <person name="Miyashita H."/>
            <person name="Tsuchiya T."/>
            <person name="Sasamoto S."/>
            <person name="Watanabe A."/>
            <person name="Kawashima K."/>
            <person name="Kishida Y."/>
            <person name="Kiyokawa C."/>
            <person name="Kohara M."/>
            <person name="Matsumoto M."/>
            <person name="Matsuno A."/>
            <person name="Nakazaki N."/>
            <person name="Shimpo S."/>
            <person name="Takeuchi C."/>
            <person name="Yamada M."/>
            <person name="Tabata S."/>
        </authorList>
    </citation>
    <scope>NUCLEOTIDE SEQUENCE [LARGE SCALE GENOMIC DNA]</scope>
    <source>
        <strain>ATCC 29082 / PCC 7421</strain>
    </source>
</reference>
<feature type="chain" id="PRO_0000136987" description="Nucleoside diphosphate kinase">
    <location>
        <begin position="1"/>
        <end position="149"/>
    </location>
</feature>
<feature type="active site" description="Pros-phosphohistidine intermediate" evidence="1">
    <location>
        <position position="115"/>
    </location>
</feature>
<feature type="binding site" evidence="1">
    <location>
        <position position="9"/>
    </location>
    <ligand>
        <name>ATP</name>
        <dbReference type="ChEBI" id="CHEBI:30616"/>
    </ligand>
</feature>
<feature type="binding site" evidence="1">
    <location>
        <position position="57"/>
    </location>
    <ligand>
        <name>ATP</name>
        <dbReference type="ChEBI" id="CHEBI:30616"/>
    </ligand>
</feature>
<feature type="binding site" evidence="1">
    <location>
        <position position="85"/>
    </location>
    <ligand>
        <name>ATP</name>
        <dbReference type="ChEBI" id="CHEBI:30616"/>
    </ligand>
</feature>
<feature type="binding site" evidence="1">
    <location>
        <position position="91"/>
    </location>
    <ligand>
        <name>ATP</name>
        <dbReference type="ChEBI" id="CHEBI:30616"/>
    </ligand>
</feature>
<feature type="binding site" evidence="1">
    <location>
        <position position="102"/>
    </location>
    <ligand>
        <name>ATP</name>
        <dbReference type="ChEBI" id="CHEBI:30616"/>
    </ligand>
</feature>
<feature type="binding site" evidence="1">
    <location>
        <position position="112"/>
    </location>
    <ligand>
        <name>ATP</name>
        <dbReference type="ChEBI" id="CHEBI:30616"/>
    </ligand>
</feature>
<comment type="function">
    <text evidence="1">Major role in the synthesis of nucleoside triphosphates other than ATP. The ATP gamma phosphate is transferred to the NDP beta phosphate via a ping-pong mechanism, using a phosphorylated active-site intermediate.</text>
</comment>
<comment type="catalytic activity">
    <reaction evidence="1">
        <text>a 2'-deoxyribonucleoside 5'-diphosphate + ATP = a 2'-deoxyribonucleoside 5'-triphosphate + ADP</text>
        <dbReference type="Rhea" id="RHEA:44640"/>
        <dbReference type="ChEBI" id="CHEBI:30616"/>
        <dbReference type="ChEBI" id="CHEBI:61560"/>
        <dbReference type="ChEBI" id="CHEBI:73316"/>
        <dbReference type="ChEBI" id="CHEBI:456216"/>
        <dbReference type="EC" id="2.7.4.6"/>
    </reaction>
</comment>
<comment type="catalytic activity">
    <reaction evidence="1">
        <text>a ribonucleoside 5'-diphosphate + ATP = a ribonucleoside 5'-triphosphate + ADP</text>
        <dbReference type="Rhea" id="RHEA:18113"/>
        <dbReference type="ChEBI" id="CHEBI:30616"/>
        <dbReference type="ChEBI" id="CHEBI:57930"/>
        <dbReference type="ChEBI" id="CHEBI:61557"/>
        <dbReference type="ChEBI" id="CHEBI:456216"/>
        <dbReference type="EC" id="2.7.4.6"/>
    </reaction>
</comment>
<comment type="cofactor">
    <cofactor evidence="1">
        <name>Mg(2+)</name>
        <dbReference type="ChEBI" id="CHEBI:18420"/>
    </cofactor>
</comment>
<comment type="subunit">
    <text evidence="1">Homotetramer.</text>
</comment>
<comment type="subcellular location">
    <subcellularLocation>
        <location evidence="1">Cytoplasm</location>
    </subcellularLocation>
</comment>
<comment type="similarity">
    <text evidence="1">Belongs to the NDK family.</text>
</comment>
<keyword id="KW-0067">ATP-binding</keyword>
<keyword id="KW-0963">Cytoplasm</keyword>
<keyword id="KW-0418">Kinase</keyword>
<keyword id="KW-0460">Magnesium</keyword>
<keyword id="KW-0479">Metal-binding</keyword>
<keyword id="KW-0546">Nucleotide metabolism</keyword>
<keyword id="KW-0547">Nucleotide-binding</keyword>
<keyword id="KW-0597">Phosphoprotein</keyword>
<keyword id="KW-1185">Reference proteome</keyword>
<keyword id="KW-0808">Transferase</keyword>
<gene>
    <name evidence="1" type="primary">ndk</name>
    <name type="ordered locus">glr0710</name>
</gene>
<organism>
    <name type="scientific">Gloeobacter violaceus (strain ATCC 29082 / PCC 7421)</name>
    <dbReference type="NCBI Taxonomy" id="251221"/>
    <lineage>
        <taxon>Bacteria</taxon>
        <taxon>Bacillati</taxon>
        <taxon>Cyanobacteriota</taxon>
        <taxon>Cyanophyceae</taxon>
        <taxon>Gloeobacterales</taxon>
        <taxon>Gloeobacteraceae</taxon>
        <taxon>Gloeobacter</taxon>
    </lineage>
</organism>
<protein>
    <recommendedName>
        <fullName evidence="1">Nucleoside diphosphate kinase</fullName>
        <shortName evidence="1">NDK</shortName>
        <shortName evidence="1">NDP kinase</shortName>
        <ecNumber evidence="1">2.7.4.6</ecNumber>
    </recommendedName>
    <alternativeName>
        <fullName evidence="1">Nucleoside-2-P kinase</fullName>
    </alternativeName>
</protein>
<name>NDK_GLOVI</name>
<accession>Q7NMQ5</accession>
<evidence type="ECO:0000255" key="1">
    <source>
        <dbReference type="HAMAP-Rule" id="MF_00451"/>
    </source>
</evidence>